<organism>
    <name type="scientific">Caenorhabditis elegans</name>
    <dbReference type="NCBI Taxonomy" id="6239"/>
    <lineage>
        <taxon>Eukaryota</taxon>
        <taxon>Metazoa</taxon>
        <taxon>Ecdysozoa</taxon>
        <taxon>Nematoda</taxon>
        <taxon>Chromadorea</taxon>
        <taxon>Rhabditida</taxon>
        <taxon>Rhabditina</taxon>
        <taxon>Rhabditomorpha</taxon>
        <taxon>Rhabditoidea</taxon>
        <taxon>Rhabditidae</taxon>
        <taxon>Peloderinae</taxon>
        <taxon>Caenorhabditis</taxon>
    </lineage>
</organism>
<proteinExistence type="evidence at protein level"/>
<gene>
    <name type="ORF">Y52B11A.8</name>
</gene>
<evidence type="ECO:0000255" key="1"/>
<evidence type="ECO:0000256" key="2">
    <source>
        <dbReference type="SAM" id="MobiDB-lite"/>
    </source>
</evidence>
<evidence type="ECO:0000269" key="3">
    <source>
    </source>
</evidence>
<evidence type="ECO:0000269" key="4">
    <source>
    </source>
</evidence>
<evidence type="ECO:0000305" key="5"/>
<name>PA2L_CAEEL</name>
<reference key="1">
    <citation type="journal article" date="1998" name="Science">
        <title>Genome sequence of the nematode C. elegans: a platform for investigating biology.</title>
        <authorList>
            <consortium name="The C. elegans sequencing consortium"/>
        </authorList>
    </citation>
    <scope>NUCLEOTIDE SEQUENCE [LARGE SCALE GENOMIC DNA]</scope>
    <source>
        <strain>Bristol N2</strain>
    </source>
</reference>
<reference key="2">
    <citation type="journal article" date="2003" name="Nat. Biotechnol.">
        <title>Lectin affinity capture, isotope-coded tagging and mass spectrometry to identify N-linked glycoproteins.</title>
        <authorList>
            <person name="Kaji H."/>
            <person name="Saito H."/>
            <person name="Yamauchi Y."/>
            <person name="Shinkawa T."/>
            <person name="Taoka M."/>
            <person name="Hirabayashi J."/>
            <person name="Kasai K."/>
            <person name="Takahashi N."/>
            <person name="Isobe T."/>
        </authorList>
    </citation>
    <scope>GLYCOSYLATION [LARGE SCALE ANALYSIS] AT ASN-49</scope>
    <scope>IDENTIFICATION BY MASS SPECTROMETRY</scope>
    <source>
        <strain>Bristol N2</strain>
    </source>
</reference>
<reference key="3">
    <citation type="journal article" date="2007" name="Mol. Cell. Proteomics">
        <title>Proteomics reveals N-linked glycoprotein diversity in Caenorhabditis elegans and suggests an atypical translocation mechanism for integral membrane proteins.</title>
        <authorList>
            <person name="Kaji H."/>
            <person name="Kamiie J."/>
            <person name="Kawakami H."/>
            <person name="Kido K."/>
            <person name="Yamauchi Y."/>
            <person name="Shinkawa T."/>
            <person name="Taoka M."/>
            <person name="Takahashi N."/>
            <person name="Isobe T."/>
        </authorList>
    </citation>
    <scope>GLYCOSYLATION [LARGE SCALE ANALYSIS] AT ASN-49</scope>
    <scope>IDENTIFICATION BY MASS SPECTROMETRY</scope>
    <source>
        <strain>Bristol N2</strain>
    </source>
</reference>
<feature type="signal peptide" evidence="1">
    <location>
        <begin position="1"/>
        <end position="18"/>
    </location>
</feature>
<feature type="chain" id="PRO_0000248532" description="Phospholipase A2-like protein Y52B11A.8">
    <location>
        <begin position="19"/>
        <end position="174"/>
    </location>
</feature>
<feature type="region of interest" description="Disordered" evidence="2">
    <location>
        <begin position="137"/>
        <end position="174"/>
    </location>
</feature>
<feature type="glycosylation site" description="N-linked (GlcNAc...) asparagine" evidence="3 4">
    <location>
        <position position="49"/>
    </location>
</feature>
<feature type="glycosylation site" description="N-linked (GlcNAc...) asparagine" evidence="1">
    <location>
        <position position="143"/>
    </location>
</feature>
<dbReference type="EMBL" id="AL032654">
    <property type="protein sequence ID" value="CAB63390.1"/>
    <property type="molecule type" value="Genomic_DNA"/>
</dbReference>
<dbReference type="RefSeq" id="NP_492859.1">
    <property type="nucleotide sequence ID" value="NM_060458.6"/>
</dbReference>
<dbReference type="SMR" id="Q9U256"/>
<dbReference type="BioGRID" id="38413">
    <property type="interactions" value="1"/>
</dbReference>
<dbReference type="FunCoup" id="Q9U256">
    <property type="interactions" value="116"/>
</dbReference>
<dbReference type="IntAct" id="Q9U256">
    <property type="interactions" value="2"/>
</dbReference>
<dbReference type="STRING" id="6239.Y52B11A.8.1"/>
<dbReference type="iPTMnet" id="Q9U256"/>
<dbReference type="PaxDb" id="6239-Y52B11A.8"/>
<dbReference type="PeptideAtlas" id="Q9U256"/>
<dbReference type="EnsemblMetazoa" id="Y52B11A.8.1">
    <property type="protein sequence ID" value="Y52B11A.8.1"/>
    <property type="gene ID" value="WBGene00013127"/>
</dbReference>
<dbReference type="GeneID" id="173004"/>
<dbReference type="KEGG" id="cel:CELE_Y52B11A.8"/>
<dbReference type="UCSC" id="Y52B11A.8">
    <property type="organism name" value="c. elegans"/>
</dbReference>
<dbReference type="AGR" id="WB:WBGene00013127"/>
<dbReference type="CTD" id="173004"/>
<dbReference type="WormBase" id="Y52B11A.8">
    <property type="protein sequence ID" value="CE20296"/>
    <property type="gene ID" value="WBGene00013127"/>
</dbReference>
<dbReference type="eggNOG" id="ENOG502SUNX">
    <property type="taxonomic scope" value="Eukaryota"/>
</dbReference>
<dbReference type="GeneTree" id="ENSGT00970000196607"/>
<dbReference type="HOGENOM" id="CLU_1541500_0_0_1"/>
<dbReference type="InParanoid" id="Q9U256"/>
<dbReference type="OMA" id="CHDESAP"/>
<dbReference type="OrthoDB" id="5781547at2759"/>
<dbReference type="PhylomeDB" id="Q9U256"/>
<dbReference type="PRO" id="PR:Q9U256"/>
<dbReference type="Proteomes" id="UP000001940">
    <property type="component" value="Chromosome I"/>
</dbReference>
<dbReference type="Bgee" id="WBGene00013127">
    <property type="expression patterns" value="Expressed in adult organism and 4 other cell types or tissues"/>
</dbReference>
<dbReference type="GO" id="GO:0005576">
    <property type="term" value="C:extracellular region"/>
    <property type="evidence" value="ECO:0007669"/>
    <property type="project" value="UniProtKB-SubCell"/>
</dbReference>
<dbReference type="GO" id="GO:0004623">
    <property type="term" value="F:phospholipase A2 activity"/>
    <property type="evidence" value="ECO:0007669"/>
    <property type="project" value="InterPro"/>
</dbReference>
<dbReference type="GO" id="GO:0050482">
    <property type="term" value="P:arachidonate secretion"/>
    <property type="evidence" value="ECO:0007669"/>
    <property type="project" value="InterPro"/>
</dbReference>
<dbReference type="GO" id="GO:0006644">
    <property type="term" value="P:phospholipid metabolic process"/>
    <property type="evidence" value="ECO:0007669"/>
    <property type="project" value="InterPro"/>
</dbReference>
<dbReference type="InterPro" id="IPR053322">
    <property type="entry name" value="PLA2-like"/>
</dbReference>
<dbReference type="InterPro" id="IPR036444">
    <property type="entry name" value="PLipase_A2_dom_sf"/>
</dbReference>
<dbReference type="InterPro" id="IPR033113">
    <property type="entry name" value="PLipase_A2_His_AS"/>
</dbReference>
<dbReference type="PANTHER" id="PTHR34228:SF3">
    <property type="entry name" value="PHOSPHOLIPASE A2-LIKE PROTEIN Y52B11A.8"/>
    <property type="match status" value="1"/>
</dbReference>
<dbReference type="PANTHER" id="PTHR34228">
    <property type="entry name" value="PROTEIN CBG09474-RELATED"/>
    <property type="match status" value="1"/>
</dbReference>
<dbReference type="SUPFAM" id="SSF48619">
    <property type="entry name" value="Phospholipase A2, PLA2"/>
    <property type="match status" value="1"/>
</dbReference>
<dbReference type="PROSITE" id="PS00118">
    <property type="entry name" value="PA2_HIS"/>
    <property type="match status" value="1"/>
</dbReference>
<sequence>MRGLLVATWIFVSVAASATPTTTTKSPPPTTTTLSPQILKAKLPPVVKNATWECGTDEFTKSISEGEIQAKCPKLRDHINSCCLQHDGCYEAQSGQKFCDDTFCSCLERRSRSSKSCHDESAPLFCDLVRTFGDGAYEASGPNASTTEESPAEKDDYDYESHVAGLNATPSSST</sequence>
<comment type="subcellular location">
    <subcellularLocation>
        <location evidence="5">Secreted</location>
    </subcellularLocation>
</comment>
<comment type="similarity">
    <text evidence="5">Belongs to the phospholipase A2 family.</text>
</comment>
<comment type="caution">
    <text evidence="5">Although strongly related to the phospholipase A2 family, it lacks the conserved active Asp in position 129, which is replaced by a Val residue, suggesting that it has no activity.</text>
</comment>
<protein>
    <recommendedName>
        <fullName>Phospholipase A2-like protein Y52B11A.8</fullName>
    </recommendedName>
</protein>
<keyword id="KW-0325">Glycoprotein</keyword>
<keyword id="KW-1185">Reference proteome</keyword>
<keyword id="KW-0964">Secreted</keyword>
<keyword id="KW-0732">Signal</keyword>
<accession>Q9U256</accession>